<organism>
    <name type="scientific">Danio rerio</name>
    <name type="common">Zebrafish</name>
    <name type="synonym">Brachydanio rerio</name>
    <dbReference type="NCBI Taxonomy" id="7955"/>
    <lineage>
        <taxon>Eukaryota</taxon>
        <taxon>Metazoa</taxon>
        <taxon>Chordata</taxon>
        <taxon>Craniata</taxon>
        <taxon>Vertebrata</taxon>
        <taxon>Euteleostomi</taxon>
        <taxon>Actinopterygii</taxon>
        <taxon>Neopterygii</taxon>
        <taxon>Teleostei</taxon>
        <taxon>Ostariophysi</taxon>
        <taxon>Cypriniformes</taxon>
        <taxon>Danionidae</taxon>
        <taxon>Danioninae</taxon>
        <taxon>Danio</taxon>
    </lineage>
</organism>
<protein>
    <recommendedName>
        <fullName>Endoplasmic reticulum-Golgi intermediate compartment protein 3</fullName>
    </recommendedName>
</protein>
<reference key="1">
    <citation type="submission" date="2003-01" db="EMBL/GenBank/DDBJ databases">
        <authorList>
            <consortium name="NIH - Zebrafish Gene Collection (ZGC) project"/>
        </authorList>
    </citation>
    <scope>NUCLEOTIDE SEQUENCE [LARGE SCALE MRNA] (ISOFORMS 1 AND 2)</scope>
    <source>
        <strain>AB</strain>
        <strain>SJD</strain>
    </source>
</reference>
<name>ERGI3_DANRE</name>
<accession>Q803I2</accession>
<accession>Q498P7</accession>
<evidence type="ECO:0000250" key="1"/>
<evidence type="ECO:0000255" key="2"/>
<evidence type="ECO:0000256" key="3">
    <source>
        <dbReference type="SAM" id="MobiDB-lite"/>
    </source>
</evidence>
<evidence type="ECO:0000303" key="4">
    <source ref="1"/>
</evidence>
<evidence type="ECO:0000305" key="5"/>
<proteinExistence type="evidence at transcript level"/>
<comment type="function">
    <text evidence="1">Possible role in transport between endoplasmic reticulum and Golgi.</text>
</comment>
<comment type="subcellular location">
    <subcellularLocation>
        <location>Endoplasmic reticulum-Golgi intermediate compartment membrane</location>
        <topology>Multi-pass membrane protein</topology>
    </subcellularLocation>
    <subcellularLocation>
        <location evidence="1">Golgi apparatus</location>
        <location evidence="1">cis-Golgi network membrane</location>
        <topology evidence="1">Multi-pass membrane protein</topology>
    </subcellularLocation>
    <subcellularLocation>
        <location evidence="1">Endoplasmic reticulum membrane</location>
        <topology evidence="1">Multi-pass membrane protein</topology>
    </subcellularLocation>
</comment>
<comment type="alternative products">
    <event type="alternative splicing"/>
    <isoform>
        <id>Q803I2-1</id>
        <name>1</name>
        <sequence type="displayed"/>
    </isoform>
    <isoform>
        <id>Q803I2-2</id>
        <name>2</name>
        <sequence type="described" ref="VSP_019217"/>
    </isoform>
</comment>
<comment type="similarity">
    <text evidence="5">Belongs to the ERGIC family.</text>
</comment>
<sequence>MDALNKLKQFDAYPKTLEDFRIKTCGGATVTIISGLIMLILFFSELQYYLTKEVHPELFVDTSRGDKLRINIDVIFPHMPCAYLSIDAMDVAGEQQLDVEHNLFKQRLDKDGQPVTTEAEKHDLGKEEEGVFDPSTLDPDRCESCYGAETDDLKCCNTCDDVREAYRRRGWAFKTPDTIEQCKREGFSQKMQEQKNEGCQVYGFLEVNKVAGNFHFAPGKSFQQSHVHVHDLQSFGLDNINMTHFIKHLSFGKDYPGIVNPLDDTNVAAPQASMMYQYFVKIVPTIYVKGDGEVVKTNQFSVTRHEKIANGLIGDQGLPGVFVLYELSPMMVKFTEKQRSFTHFLTGVCAIIGGVFTVAGLIDSLIYHSARAIQKKIELGKAS</sequence>
<feature type="chain" id="PRO_0000239390" description="Endoplasmic reticulum-Golgi intermediate compartment protein 3">
    <location>
        <begin position="1"/>
        <end position="383"/>
    </location>
</feature>
<feature type="topological domain" description="Cytoplasmic" evidence="2">
    <location>
        <begin position="1"/>
        <end position="25"/>
    </location>
</feature>
<feature type="transmembrane region" description="Helical" evidence="2">
    <location>
        <begin position="26"/>
        <end position="46"/>
    </location>
</feature>
<feature type="topological domain" description="Lumenal" evidence="2">
    <location>
        <begin position="47"/>
        <end position="341"/>
    </location>
</feature>
<feature type="transmembrane region" description="Helical" evidence="2">
    <location>
        <begin position="342"/>
        <end position="362"/>
    </location>
</feature>
<feature type="topological domain" description="Cytoplasmic" evidence="2">
    <location>
        <begin position="363"/>
        <end position="383"/>
    </location>
</feature>
<feature type="region of interest" description="Disordered" evidence="3">
    <location>
        <begin position="110"/>
        <end position="132"/>
    </location>
</feature>
<feature type="compositionally biased region" description="Basic and acidic residues" evidence="3">
    <location>
        <begin position="110"/>
        <end position="129"/>
    </location>
</feature>
<feature type="splice variant" id="VSP_019217" description="In isoform 2." evidence="4">
    <original>V</original>
    <variation>VHAVEI</variation>
    <location>
        <position position="229"/>
    </location>
</feature>
<keyword id="KW-0025">Alternative splicing</keyword>
<keyword id="KW-0256">Endoplasmic reticulum</keyword>
<keyword id="KW-0931">ER-Golgi transport</keyword>
<keyword id="KW-0333">Golgi apparatus</keyword>
<keyword id="KW-0472">Membrane</keyword>
<keyword id="KW-1185">Reference proteome</keyword>
<keyword id="KW-0812">Transmembrane</keyword>
<keyword id="KW-1133">Transmembrane helix</keyword>
<keyword id="KW-0813">Transport</keyword>
<dbReference type="EMBL" id="BC044474">
    <property type="protein sequence ID" value="AAH44474.1"/>
    <property type="molecule type" value="mRNA"/>
</dbReference>
<dbReference type="EMBL" id="BC100125">
    <property type="protein sequence ID" value="AAI00126.1"/>
    <property type="molecule type" value="mRNA"/>
</dbReference>
<dbReference type="RefSeq" id="NP_001028277.1">
    <molecule id="Q803I2-2"/>
    <property type="nucleotide sequence ID" value="NM_001033105.1"/>
</dbReference>
<dbReference type="RefSeq" id="NP_957309.1">
    <molecule id="Q803I2-1"/>
    <property type="nucleotide sequence ID" value="NM_201015.1"/>
</dbReference>
<dbReference type="SMR" id="Q803I2"/>
<dbReference type="FunCoup" id="Q803I2">
    <property type="interactions" value="2578"/>
</dbReference>
<dbReference type="STRING" id="7955.ENSDARP00000055510"/>
<dbReference type="PaxDb" id="7955-ENSDARP00000055510"/>
<dbReference type="Ensembl" id="ENSDART00000055502">
    <molecule id="Q803I2-1"/>
    <property type="protein sequence ID" value="ENSDARP00000055501"/>
    <property type="gene ID" value="ENSDARG00000038074"/>
</dbReference>
<dbReference type="GeneID" id="393990"/>
<dbReference type="KEGG" id="dre:393990"/>
<dbReference type="AGR" id="ZFIN:ZDB-GENE-040426-795"/>
<dbReference type="CTD" id="51614"/>
<dbReference type="ZFIN" id="ZDB-GENE-040426-795">
    <property type="gene designation" value="ergic3"/>
</dbReference>
<dbReference type="eggNOG" id="KOG2667">
    <property type="taxonomic scope" value="Eukaryota"/>
</dbReference>
<dbReference type="HOGENOM" id="CLU_034705_1_0_1"/>
<dbReference type="InParanoid" id="Q803I2"/>
<dbReference type="OMA" id="QRHEGCR"/>
<dbReference type="OrthoDB" id="270930at2759"/>
<dbReference type="PhylomeDB" id="Q803I2"/>
<dbReference type="TreeFam" id="TF300739"/>
<dbReference type="PRO" id="PR:Q803I2"/>
<dbReference type="Proteomes" id="UP000000437">
    <property type="component" value="Chromosome 6"/>
</dbReference>
<dbReference type="Bgee" id="ENSDARG00000038074">
    <property type="expression patterns" value="Expressed in mature ovarian follicle and 27 other cell types or tissues"/>
</dbReference>
<dbReference type="ExpressionAtlas" id="Q803I2">
    <property type="expression patterns" value="baseline and differential"/>
</dbReference>
<dbReference type="GO" id="GO:0030134">
    <property type="term" value="C:COPII-coated ER to Golgi transport vesicle"/>
    <property type="evidence" value="ECO:0000318"/>
    <property type="project" value="GO_Central"/>
</dbReference>
<dbReference type="GO" id="GO:0005783">
    <property type="term" value="C:endoplasmic reticulum"/>
    <property type="evidence" value="ECO:0000318"/>
    <property type="project" value="GO_Central"/>
</dbReference>
<dbReference type="GO" id="GO:0005789">
    <property type="term" value="C:endoplasmic reticulum membrane"/>
    <property type="evidence" value="ECO:0000318"/>
    <property type="project" value="GO_Central"/>
</dbReference>
<dbReference type="GO" id="GO:0033116">
    <property type="term" value="C:endoplasmic reticulum-Golgi intermediate compartment membrane"/>
    <property type="evidence" value="ECO:0007669"/>
    <property type="project" value="UniProtKB-SubCell"/>
</dbReference>
<dbReference type="GO" id="GO:0000139">
    <property type="term" value="C:Golgi membrane"/>
    <property type="evidence" value="ECO:0000318"/>
    <property type="project" value="GO_Central"/>
</dbReference>
<dbReference type="GO" id="GO:0006888">
    <property type="term" value="P:endoplasmic reticulum to Golgi vesicle-mediated transport"/>
    <property type="evidence" value="ECO:0000318"/>
    <property type="project" value="GO_Central"/>
</dbReference>
<dbReference type="GO" id="GO:0006890">
    <property type="term" value="P:retrograde vesicle-mediated transport, Golgi to endoplasmic reticulum"/>
    <property type="evidence" value="ECO:0000318"/>
    <property type="project" value="GO_Central"/>
</dbReference>
<dbReference type="InterPro" id="IPR045888">
    <property type="entry name" value="Erv"/>
</dbReference>
<dbReference type="InterPro" id="IPR012936">
    <property type="entry name" value="Erv_C"/>
</dbReference>
<dbReference type="InterPro" id="IPR039542">
    <property type="entry name" value="Erv_N"/>
</dbReference>
<dbReference type="PANTHER" id="PTHR10984">
    <property type="entry name" value="ENDOPLASMIC RETICULUM-GOLGI INTERMEDIATE COMPARTMENT PROTEIN"/>
    <property type="match status" value="1"/>
</dbReference>
<dbReference type="PANTHER" id="PTHR10984:SF25">
    <property type="entry name" value="ENDOPLASMIC RETICULUM-GOLGI INTERMEDIATE COMPARTMENT PROTEIN 3"/>
    <property type="match status" value="1"/>
</dbReference>
<dbReference type="Pfam" id="PF07970">
    <property type="entry name" value="COPIIcoated_ERV"/>
    <property type="match status" value="1"/>
</dbReference>
<dbReference type="Pfam" id="PF13850">
    <property type="entry name" value="ERGIC_N"/>
    <property type="match status" value="1"/>
</dbReference>
<gene>
    <name type="primary">ergic3</name>
    <name type="ORF">zgc:113959</name>
    <name type="ORF">zgc:55762</name>
</gene>